<sequence length="462" mass="53843">MENKKENFSEWYNEIITLAELSDKRYPVKGMNVWLPYGWKIMSLIDSIVRRAVDKRNFQEVNFPILIGRSMLEVEFEHIRGFENEIYWVTKGGKEKLEEELALRPTSESAMYPMFSLWIRSHADLPLKIYQIVSVYRYETKHTRSFIRIREIHFFEAHTAHATYEDAEAQMDQYKEIWREISSLLCLPYFYDQRPDWDKFPGAMYTIAFDTVLPSGRSLQIGTIHQYGTNFSKNYDIKYLKEDGTFDYAHQTTYGMSERLLAAIIGIHGDDKGLVLPPDVAPIQVIIIPIPGAGVMEYARDVENTLNSINIRVKVDDRENYTPGYKFNDWEMRGVPLRIEIGEREVKNRTLTISMRNIQGKLTIERSKLIYEVPDTLIRIREKMMENAQKVFKDHVFRATKLEEFNRDGLITAFWCGSKECSDKIEAETEKSVLGFMVDSSETGKCVVCGKNGKMAVFSRSY</sequence>
<protein>
    <recommendedName>
        <fullName evidence="1">Proline--tRNA ligase</fullName>
        <ecNumber evidence="1">6.1.1.15</ecNumber>
    </recommendedName>
    <alternativeName>
        <fullName evidence="1">Prolyl-tRNA synthetase</fullName>
        <shortName evidence="1">ProRS</shortName>
    </alternativeName>
</protein>
<comment type="function">
    <text evidence="1">Catalyzes the attachment of proline to tRNA(Pro) in a two-step reaction: proline is first activated by ATP to form Pro-AMP and then transferred to the acceptor end of tRNA(Pro).</text>
</comment>
<comment type="catalytic activity">
    <reaction evidence="1">
        <text>tRNA(Pro) + L-proline + ATP = L-prolyl-tRNA(Pro) + AMP + diphosphate</text>
        <dbReference type="Rhea" id="RHEA:14305"/>
        <dbReference type="Rhea" id="RHEA-COMP:9700"/>
        <dbReference type="Rhea" id="RHEA-COMP:9702"/>
        <dbReference type="ChEBI" id="CHEBI:30616"/>
        <dbReference type="ChEBI" id="CHEBI:33019"/>
        <dbReference type="ChEBI" id="CHEBI:60039"/>
        <dbReference type="ChEBI" id="CHEBI:78442"/>
        <dbReference type="ChEBI" id="CHEBI:78532"/>
        <dbReference type="ChEBI" id="CHEBI:456215"/>
        <dbReference type="EC" id="6.1.1.15"/>
    </reaction>
</comment>
<comment type="subunit">
    <text evidence="1">Homodimer.</text>
</comment>
<comment type="subcellular location">
    <subcellularLocation>
        <location evidence="1">Cytoplasm</location>
    </subcellularLocation>
</comment>
<comment type="domain">
    <text evidence="1">Consists of three domains: the N-terminal catalytic domain, the anticodon-binding domain and the C-terminal extension.</text>
</comment>
<comment type="similarity">
    <text evidence="1">Belongs to the class-II aminoacyl-tRNA synthetase family. ProS type 3 subfamily.</text>
</comment>
<reference key="1">
    <citation type="journal article" date="2000" name="Nature">
        <title>The genome sequence of the thermoacidophilic scavenger Thermoplasma acidophilum.</title>
        <authorList>
            <person name="Ruepp A."/>
            <person name="Graml W."/>
            <person name="Santos-Martinez M.-L."/>
            <person name="Koretke K.K."/>
            <person name="Volker C."/>
            <person name="Mewes H.-W."/>
            <person name="Frishman D."/>
            <person name="Stocker S."/>
            <person name="Lupas A.N."/>
            <person name="Baumeister W."/>
        </authorList>
    </citation>
    <scope>NUCLEOTIDE SEQUENCE [LARGE SCALE GENOMIC DNA]</scope>
    <source>
        <strain>ATCC 25905 / DSM 1728 / JCM 9062 / NBRC 15155 / AMRC-C165</strain>
    </source>
</reference>
<dbReference type="EC" id="6.1.1.15" evidence="1"/>
<dbReference type="EMBL" id="AL445066">
    <property type="protein sequence ID" value="CAC12066.1"/>
    <property type="molecule type" value="Genomic_DNA"/>
</dbReference>
<dbReference type="RefSeq" id="WP_010901346.1">
    <property type="nucleotide sequence ID" value="NC_002578.1"/>
</dbReference>
<dbReference type="SMR" id="Q9HJN0"/>
<dbReference type="FunCoup" id="Q9HJN0">
    <property type="interactions" value="108"/>
</dbReference>
<dbReference type="STRING" id="273075.gene:9572154"/>
<dbReference type="PaxDb" id="273075-Ta0937"/>
<dbReference type="EnsemblBacteria" id="CAC12066">
    <property type="protein sequence ID" value="CAC12066"/>
    <property type="gene ID" value="CAC12066"/>
</dbReference>
<dbReference type="KEGG" id="tac:Ta0937"/>
<dbReference type="eggNOG" id="arCOG00402">
    <property type="taxonomic scope" value="Archaea"/>
</dbReference>
<dbReference type="HOGENOM" id="CLU_001882_4_2_2"/>
<dbReference type="InParanoid" id="Q9HJN0"/>
<dbReference type="OrthoDB" id="7375at2157"/>
<dbReference type="Proteomes" id="UP000001024">
    <property type="component" value="Chromosome"/>
</dbReference>
<dbReference type="GO" id="GO:0017101">
    <property type="term" value="C:aminoacyl-tRNA synthetase multienzyme complex"/>
    <property type="evidence" value="ECO:0007669"/>
    <property type="project" value="TreeGrafter"/>
</dbReference>
<dbReference type="GO" id="GO:0005737">
    <property type="term" value="C:cytoplasm"/>
    <property type="evidence" value="ECO:0007669"/>
    <property type="project" value="UniProtKB-SubCell"/>
</dbReference>
<dbReference type="GO" id="GO:0005524">
    <property type="term" value="F:ATP binding"/>
    <property type="evidence" value="ECO:0007669"/>
    <property type="project" value="UniProtKB-UniRule"/>
</dbReference>
<dbReference type="GO" id="GO:0004827">
    <property type="term" value="F:proline-tRNA ligase activity"/>
    <property type="evidence" value="ECO:0007669"/>
    <property type="project" value="UniProtKB-UniRule"/>
</dbReference>
<dbReference type="GO" id="GO:0006433">
    <property type="term" value="P:prolyl-tRNA aminoacylation"/>
    <property type="evidence" value="ECO:0007669"/>
    <property type="project" value="UniProtKB-UniRule"/>
</dbReference>
<dbReference type="CDD" id="cd00862">
    <property type="entry name" value="ProRS_anticodon_zinc"/>
    <property type="match status" value="1"/>
</dbReference>
<dbReference type="CDD" id="cd00778">
    <property type="entry name" value="ProRS_core_arch_euk"/>
    <property type="match status" value="1"/>
</dbReference>
<dbReference type="FunFam" id="3.40.50.800:FF:000005">
    <property type="entry name" value="bifunctional glutamate/proline--tRNA ligase"/>
    <property type="match status" value="1"/>
</dbReference>
<dbReference type="FunFam" id="3.30.930.10:FF:000037">
    <property type="entry name" value="Proline--tRNA ligase"/>
    <property type="match status" value="1"/>
</dbReference>
<dbReference type="Gene3D" id="3.40.50.800">
    <property type="entry name" value="Anticodon-binding domain"/>
    <property type="match status" value="1"/>
</dbReference>
<dbReference type="Gene3D" id="3.30.930.10">
    <property type="entry name" value="Bira Bifunctional Protein, Domain 2"/>
    <property type="match status" value="1"/>
</dbReference>
<dbReference type="Gene3D" id="3.30.110.30">
    <property type="entry name" value="C-terminal domain of ProRS"/>
    <property type="match status" value="1"/>
</dbReference>
<dbReference type="HAMAP" id="MF_01571">
    <property type="entry name" value="Pro_tRNA_synth_type3"/>
    <property type="match status" value="1"/>
</dbReference>
<dbReference type="InterPro" id="IPR002314">
    <property type="entry name" value="aa-tRNA-synt_IIb"/>
</dbReference>
<dbReference type="InterPro" id="IPR006195">
    <property type="entry name" value="aa-tRNA-synth_II"/>
</dbReference>
<dbReference type="InterPro" id="IPR045864">
    <property type="entry name" value="aa-tRNA-synth_II/BPL/LPL"/>
</dbReference>
<dbReference type="InterPro" id="IPR004154">
    <property type="entry name" value="Anticodon-bd"/>
</dbReference>
<dbReference type="InterPro" id="IPR036621">
    <property type="entry name" value="Anticodon-bd_dom_sf"/>
</dbReference>
<dbReference type="InterPro" id="IPR002316">
    <property type="entry name" value="Pro-tRNA-ligase_IIa"/>
</dbReference>
<dbReference type="InterPro" id="IPR004499">
    <property type="entry name" value="Pro-tRNA-ligase_IIa_arc-type"/>
</dbReference>
<dbReference type="InterPro" id="IPR016061">
    <property type="entry name" value="Pro-tRNA_ligase_II_C"/>
</dbReference>
<dbReference type="InterPro" id="IPR017449">
    <property type="entry name" value="Pro-tRNA_synth_II"/>
</dbReference>
<dbReference type="InterPro" id="IPR033721">
    <property type="entry name" value="ProRS_core_arch_euk"/>
</dbReference>
<dbReference type="NCBIfam" id="TIGR00408">
    <property type="entry name" value="proS_fam_I"/>
    <property type="match status" value="1"/>
</dbReference>
<dbReference type="PANTHER" id="PTHR43382:SF2">
    <property type="entry name" value="BIFUNCTIONAL GLUTAMATE_PROLINE--TRNA LIGASE"/>
    <property type="match status" value="1"/>
</dbReference>
<dbReference type="PANTHER" id="PTHR43382">
    <property type="entry name" value="PROLYL-TRNA SYNTHETASE"/>
    <property type="match status" value="1"/>
</dbReference>
<dbReference type="Pfam" id="PF03129">
    <property type="entry name" value="HGTP_anticodon"/>
    <property type="match status" value="1"/>
</dbReference>
<dbReference type="Pfam" id="PF09180">
    <property type="entry name" value="ProRS-C_1"/>
    <property type="match status" value="1"/>
</dbReference>
<dbReference type="Pfam" id="PF00587">
    <property type="entry name" value="tRNA-synt_2b"/>
    <property type="match status" value="1"/>
</dbReference>
<dbReference type="PRINTS" id="PR01046">
    <property type="entry name" value="TRNASYNTHPRO"/>
</dbReference>
<dbReference type="SMART" id="SM00946">
    <property type="entry name" value="ProRS-C_1"/>
    <property type="match status" value="1"/>
</dbReference>
<dbReference type="SUPFAM" id="SSF64586">
    <property type="entry name" value="C-terminal domain of ProRS"/>
    <property type="match status" value="1"/>
</dbReference>
<dbReference type="SUPFAM" id="SSF52954">
    <property type="entry name" value="Class II aaRS ABD-related"/>
    <property type="match status" value="1"/>
</dbReference>
<dbReference type="SUPFAM" id="SSF55681">
    <property type="entry name" value="Class II aaRS and biotin synthetases"/>
    <property type="match status" value="1"/>
</dbReference>
<dbReference type="PROSITE" id="PS50862">
    <property type="entry name" value="AA_TRNA_LIGASE_II"/>
    <property type="match status" value="1"/>
</dbReference>
<name>SYP_THEAC</name>
<organism>
    <name type="scientific">Thermoplasma acidophilum (strain ATCC 25905 / DSM 1728 / JCM 9062 / NBRC 15155 / AMRC-C165)</name>
    <dbReference type="NCBI Taxonomy" id="273075"/>
    <lineage>
        <taxon>Archaea</taxon>
        <taxon>Methanobacteriati</taxon>
        <taxon>Thermoplasmatota</taxon>
        <taxon>Thermoplasmata</taxon>
        <taxon>Thermoplasmatales</taxon>
        <taxon>Thermoplasmataceae</taxon>
        <taxon>Thermoplasma</taxon>
    </lineage>
</organism>
<feature type="chain" id="PRO_0000249176" description="Proline--tRNA ligase">
    <location>
        <begin position="1"/>
        <end position="462"/>
    </location>
</feature>
<evidence type="ECO:0000255" key="1">
    <source>
        <dbReference type="HAMAP-Rule" id="MF_01571"/>
    </source>
</evidence>
<gene>
    <name evidence="1" type="primary">proS</name>
    <name type="ordered locus">Ta0937</name>
</gene>
<accession>Q9HJN0</accession>
<keyword id="KW-0030">Aminoacyl-tRNA synthetase</keyword>
<keyword id="KW-0067">ATP-binding</keyword>
<keyword id="KW-0963">Cytoplasm</keyword>
<keyword id="KW-0436">Ligase</keyword>
<keyword id="KW-0547">Nucleotide-binding</keyword>
<keyword id="KW-0648">Protein biosynthesis</keyword>
<keyword id="KW-1185">Reference proteome</keyword>
<proteinExistence type="inferred from homology"/>